<feature type="chain" id="PRO_1000083256" description="Adenosylcobinamide-GDP ribazoletransferase">
    <location>
        <begin position="1"/>
        <end position="247"/>
    </location>
</feature>
<feature type="transmembrane region" description="Helical" evidence="1">
    <location>
        <begin position="34"/>
        <end position="54"/>
    </location>
</feature>
<feature type="transmembrane region" description="Helical" evidence="1">
    <location>
        <begin position="59"/>
        <end position="79"/>
    </location>
</feature>
<feature type="transmembrane region" description="Helical" evidence="1">
    <location>
        <begin position="113"/>
        <end position="133"/>
    </location>
</feature>
<feature type="transmembrane region" description="Helical" evidence="1">
    <location>
        <begin position="194"/>
        <end position="214"/>
    </location>
</feature>
<keyword id="KW-0997">Cell inner membrane</keyword>
<keyword id="KW-1003">Cell membrane</keyword>
<keyword id="KW-0169">Cobalamin biosynthesis</keyword>
<keyword id="KW-0460">Magnesium</keyword>
<keyword id="KW-0472">Membrane</keyword>
<keyword id="KW-0808">Transferase</keyword>
<keyword id="KW-0812">Transmembrane</keyword>
<keyword id="KW-1133">Transmembrane helix</keyword>
<name>COBS_ECOLC</name>
<protein>
    <recommendedName>
        <fullName evidence="1">Adenosylcobinamide-GDP ribazoletransferase</fullName>
        <ecNumber evidence="1">2.7.8.26</ecNumber>
    </recommendedName>
    <alternativeName>
        <fullName evidence="1">Cobalamin synthase</fullName>
    </alternativeName>
    <alternativeName>
        <fullName evidence="1">Cobalamin-5'-phosphate synthase</fullName>
    </alternativeName>
</protein>
<proteinExistence type="inferred from homology"/>
<organism>
    <name type="scientific">Escherichia coli (strain ATCC 8739 / DSM 1576 / NBRC 3972 / NCIMB 8545 / WDCM 00012 / Crooks)</name>
    <dbReference type="NCBI Taxonomy" id="481805"/>
    <lineage>
        <taxon>Bacteria</taxon>
        <taxon>Pseudomonadati</taxon>
        <taxon>Pseudomonadota</taxon>
        <taxon>Gammaproteobacteria</taxon>
        <taxon>Enterobacterales</taxon>
        <taxon>Enterobacteriaceae</taxon>
        <taxon>Escherichia</taxon>
    </lineage>
</organism>
<comment type="function">
    <text evidence="1">Joins adenosylcobinamide-GDP and alpha-ribazole to generate adenosylcobalamin (Ado-cobalamin). Also synthesizes adenosylcobalamin 5'-phosphate from adenosylcobinamide-GDP and alpha-ribazole 5'-phosphate.</text>
</comment>
<comment type="catalytic activity">
    <reaction evidence="1">
        <text>alpha-ribazole + adenosylcob(III)inamide-GDP = adenosylcob(III)alamin + GMP + H(+)</text>
        <dbReference type="Rhea" id="RHEA:16049"/>
        <dbReference type="ChEBI" id="CHEBI:10329"/>
        <dbReference type="ChEBI" id="CHEBI:15378"/>
        <dbReference type="ChEBI" id="CHEBI:18408"/>
        <dbReference type="ChEBI" id="CHEBI:58115"/>
        <dbReference type="ChEBI" id="CHEBI:60487"/>
        <dbReference type="EC" id="2.7.8.26"/>
    </reaction>
</comment>
<comment type="catalytic activity">
    <reaction evidence="1">
        <text>alpha-ribazole 5'-phosphate + adenosylcob(III)inamide-GDP = adenosylcob(III)alamin 5'-phosphate + GMP + H(+)</text>
        <dbReference type="Rhea" id="RHEA:23560"/>
        <dbReference type="ChEBI" id="CHEBI:15378"/>
        <dbReference type="ChEBI" id="CHEBI:57918"/>
        <dbReference type="ChEBI" id="CHEBI:58115"/>
        <dbReference type="ChEBI" id="CHEBI:60487"/>
        <dbReference type="ChEBI" id="CHEBI:60493"/>
        <dbReference type="EC" id="2.7.8.26"/>
    </reaction>
</comment>
<comment type="cofactor">
    <cofactor evidence="1">
        <name>Mg(2+)</name>
        <dbReference type="ChEBI" id="CHEBI:18420"/>
    </cofactor>
</comment>
<comment type="pathway">
    <text evidence="1">Cofactor biosynthesis; adenosylcobalamin biosynthesis; adenosylcobalamin from cob(II)yrinate a,c-diamide: step 7/7.</text>
</comment>
<comment type="subcellular location">
    <subcellularLocation>
        <location evidence="1">Cell inner membrane</location>
        <topology evidence="1">Multi-pass membrane protein</topology>
    </subcellularLocation>
</comment>
<comment type="similarity">
    <text evidence="1">Belongs to the CobS family.</text>
</comment>
<sequence length="247" mass="26317">MSKLFWAMLSFITRLPVPRRWSQGLDFEHYSRGIITFPLIGLLLGAISGLVFMVLQAWCGVPLAALFSVLVLALMTGGFHLDGLADTCDGVFSARSRDCMLEIMRDSRLGTHGGLALIFVVLAKILVLSELALRGEPSLASLAAACAVSRGTAALLMYRHRYAREEGLGNVFIGKIDGRQTCVTLGLAAIFAAVLLPGMHGVAAMVVTMVAIFILGQLLKRTLGGQTGDTLGAAIELGELVFLLALL</sequence>
<dbReference type="EC" id="2.7.8.26" evidence="1"/>
<dbReference type="EMBL" id="CP000946">
    <property type="protein sequence ID" value="ACA77293.1"/>
    <property type="molecule type" value="Genomic_DNA"/>
</dbReference>
<dbReference type="RefSeq" id="WP_012304857.1">
    <property type="nucleotide sequence ID" value="NC_010468.1"/>
</dbReference>
<dbReference type="KEGG" id="ecl:EcolC_1636"/>
<dbReference type="HOGENOM" id="CLU_057426_1_1_6"/>
<dbReference type="UniPathway" id="UPA00148">
    <property type="reaction ID" value="UER00238"/>
</dbReference>
<dbReference type="GO" id="GO:0005886">
    <property type="term" value="C:plasma membrane"/>
    <property type="evidence" value="ECO:0007669"/>
    <property type="project" value="UniProtKB-SubCell"/>
</dbReference>
<dbReference type="GO" id="GO:0051073">
    <property type="term" value="F:adenosylcobinamide-GDP ribazoletransferase activity"/>
    <property type="evidence" value="ECO:0007669"/>
    <property type="project" value="UniProtKB-UniRule"/>
</dbReference>
<dbReference type="GO" id="GO:0008818">
    <property type="term" value="F:cobalamin 5'-phosphate synthase activity"/>
    <property type="evidence" value="ECO:0007669"/>
    <property type="project" value="UniProtKB-UniRule"/>
</dbReference>
<dbReference type="GO" id="GO:0009236">
    <property type="term" value="P:cobalamin biosynthetic process"/>
    <property type="evidence" value="ECO:0007669"/>
    <property type="project" value="UniProtKB-UniRule"/>
</dbReference>
<dbReference type="HAMAP" id="MF_00719">
    <property type="entry name" value="CobS"/>
    <property type="match status" value="1"/>
</dbReference>
<dbReference type="InterPro" id="IPR003805">
    <property type="entry name" value="CobS"/>
</dbReference>
<dbReference type="NCBIfam" id="TIGR00317">
    <property type="entry name" value="cobS"/>
    <property type="match status" value="1"/>
</dbReference>
<dbReference type="PANTHER" id="PTHR34148">
    <property type="entry name" value="ADENOSYLCOBINAMIDE-GDP RIBAZOLETRANSFERASE"/>
    <property type="match status" value="1"/>
</dbReference>
<dbReference type="PANTHER" id="PTHR34148:SF1">
    <property type="entry name" value="ADENOSYLCOBINAMIDE-GDP RIBAZOLETRANSFERASE"/>
    <property type="match status" value="1"/>
</dbReference>
<dbReference type="Pfam" id="PF02654">
    <property type="entry name" value="CobS"/>
    <property type="match status" value="1"/>
</dbReference>
<evidence type="ECO:0000255" key="1">
    <source>
        <dbReference type="HAMAP-Rule" id="MF_00719"/>
    </source>
</evidence>
<reference key="1">
    <citation type="submission" date="2008-02" db="EMBL/GenBank/DDBJ databases">
        <title>Complete sequence of Escherichia coli C str. ATCC 8739.</title>
        <authorList>
            <person name="Copeland A."/>
            <person name="Lucas S."/>
            <person name="Lapidus A."/>
            <person name="Glavina del Rio T."/>
            <person name="Dalin E."/>
            <person name="Tice H."/>
            <person name="Bruce D."/>
            <person name="Goodwin L."/>
            <person name="Pitluck S."/>
            <person name="Kiss H."/>
            <person name="Brettin T."/>
            <person name="Detter J.C."/>
            <person name="Han C."/>
            <person name="Kuske C.R."/>
            <person name="Schmutz J."/>
            <person name="Larimer F."/>
            <person name="Land M."/>
            <person name="Hauser L."/>
            <person name="Kyrpides N."/>
            <person name="Mikhailova N."/>
            <person name="Ingram L."/>
            <person name="Richardson P."/>
        </authorList>
    </citation>
    <scope>NUCLEOTIDE SEQUENCE [LARGE SCALE GENOMIC DNA]</scope>
    <source>
        <strain>ATCC 8739 / DSM 1576 / NBRC 3972 / NCIMB 8545 / WDCM 00012 / Crooks</strain>
    </source>
</reference>
<accession>B1IZQ8</accession>
<gene>
    <name evidence="1" type="primary">cobS</name>
    <name type="ordered locus">EcolC_1636</name>
</gene>